<reference key="1">
    <citation type="journal article" date="2005" name="J. Cell. Biochem.">
        <title>Cyclic AMP-dependent modification of gonad-selective TAF(II)105 in a human ovarian granulosa cell line.</title>
        <authorList>
            <person name="Wu Y."/>
            <person name="Lu Y."/>
            <person name="Hu Y."/>
            <person name="Li R."/>
        </authorList>
    </citation>
    <scope>NUCLEOTIDE SEQUENCE [MRNA] (ISOFORMS 1 AND 2)</scope>
    <scope>FUNCTION</scope>
    <scope>PHOSPHORYLATION</scope>
    <scope>SUBCELLULAR LOCATION</scope>
    <scope>TISSUE SPECIFICITY</scope>
    <source>
        <tissue>Ovarian carcinoma</tissue>
    </source>
</reference>
<reference key="2">
    <citation type="journal article" date="1996" name="Cell">
        <title>Human TAFII 105 is a cell type-specific TFIID subunit related to hTAFII130.</title>
        <authorList>
            <person name="Dikstein R."/>
            <person name="Zhou S."/>
            <person name="Tjian R."/>
        </authorList>
    </citation>
    <scope>NUCLEOTIDE SEQUENCE [MRNA] OF 67-862 (ISOFORM 1)</scope>
    <scope>PROTEIN SEQUENCE OF 81-85; 242-253; 281-290; 302-310; 377-388; 473-479; 507-522; 580-587; 675-689; 697-712 AND 746-800</scope>
    <scope>TISSUE SPECIFICITY</scope>
</reference>
<reference key="3">
    <citation type="journal article" date="2000" name="J. Biol. Chem.">
        <title>Specific interaction of TAFII105 with OCA-B is involved in activation of octamer-dependent transcription.</title>
        <authorList>
            <person name="Wolstein O."/>
            <person name="Silkov A."/>
            <person name="Revach M."/>
            <person name="Dikstein R."/>
        </authorList>
    </citation>
    <scope>INTERACTION WITH POU2AF1</scope>
    <scope>FUNCTION</scope>
</reference>
<reference key="4">
    <citation type="journal article" date="2000" name="J. Biol. Chem.">
        <title>Interaction of TAFII105 with selected p65/RelA dimers is associated with activation of subset of NF-kappa B genes.</title>
        <authorList>
            <person name="Yamit-Hezi A."/>
            <person name="Nir S."/>
            <person name="Wolstein O."/>
            <person name="Dikstein R."/>
        </authorList>
    </citation>
    <scope>INTERACTION WITH P65/RELA AND REL</scope>
    <scope>FUNCTION</scope>
</reference>
<reference key="5">
    <citation type="journal article" date="2001" name="J. Biol. Chem.">
        <title>A composite nuclear export signal in the TBP-associated factor TAFII105.</title>
        <authorList>
            <person name="Rashevsky-Finkel A."/>
            <person name="Silkov A."/>
            <person name="Dikstein R."/>
        </authorList>
    </citation>
    <scope>SUBCELLULAR LOCATION</scope>
    <scope>NUCLEAR EXPORT SIGNAL</scope>
</reference>
<reference key="6">
    <citation type="journal article" date="2005" name="Mol. Cell. Biol.">
        <title>Core promoter binding by histone-like TAF complexes.</title>
        <authorList>
            <person name="Shao H."/>
            <person name="Revach M."/>
            <person name="Moshonov S."/>
            <person name="Tzuman Y."/>
            <person name="Gazit K."/>
            <person name="Albeck S."/>
            <person name="Unger T."/>
            <person name="Dikstein R."/>
        </authorList>
    </citation>
    <scope>INTERACTION WITH TAF12 IN A COMPLEX WITH TAF6; TAF9; TAF12 AND TAF4B</scope>
    <scope>DNA-BINDING</scope>
</reference>
<reference key="7">
    <citation type="journal article" date="2009" name="Anal. Chem.">
        <title>Lys-N and trypsin cover complementary parts of the phosphoproteome in a refined SCX-based approach.</title>
        <authorList>
            <person name="Gauci S."/>
            <person name="Helbig A.O."/>
            <person name="Slijper M."/>
            <person name="Krijgsveld J."/>
            <person name="Heck A.J."/>
            <person name="Mohammed S."/>
        </authorList>
    </citation>
    <scope>IDENTIFICATION BY MASS SPECTROMETRY [LARGE SCALE ANALYSIS]</scope>
</reference>
<reference key="8">
    <citation type="journal article" date="2013" name="J. Proteome Res.">
        <title>Toward a comprehensive characterization of a human cancer cell phosphoproteome.</title>
        <authorList>
            <person name="Zhou H."/>
            <person name="Di Palma S."/>
            <person name="Preisinger C."/>
            <person name="Peng M."/>
            <person name="Polat A.N."/>
            <person name="Heck A.J."/>
            <person name="Mohammed S."/>
        </authorList>
    </citation>
    <scope>PHOSPHORYLATION [LARGE SCALE ANALYSIS] AT SER-595</scope>
    <scope>IDENTIFICATION BY MASS SPECTROMETRY [LARGE SCALE ANALYSIS]</scope>
    <source>
        <tissue>Cervix carcinoma</tissue>
        <tissue>Erythroleukemia</tissue>
    </source>
</reference>
<reference key="9">
    <citation type="journal article" date="2014" name="J. Med. Genet.">
        <title>Truncating mutations in TAF4B and ZMYND15 causing recessive azoospermia.</title>
        <authorList>
            <person name="Ayhan O."/>
            <person name="Balkan M."/>
            <person name="Guven A."/>
            <person name="Hazan R."/>
            <person name="Atar M."/>
            <person name="Tok A."/>
            <person name="Tolun A."/>
        </authorList>
    </citation>
    <scope>INVOLVEMENT IN SPGF13</scope>
    <scope>POSSIBLE FUNCTION</scope>
</reference>
<evidence type="ECO:0000250" key="1">
    <source>
        <dbReference type="UniProtKB" id="G5E8Z2"/>
    </source>
</evidence>
<evidence type="ECO:0000255" key="2"/>
<evidence type="ECO:0000255" key="3">
    <source>
        <dbReference type="PROSITE-ProRule" id="PRU00440"/>
    </source>
</evidence>
<evidence type="ECO:0000256" key="4">
    <source>
        <dbReference type="SAM" id="MobiDB-lite"/>
    </source>
</evidence>
<evidence type="ECO:0000269" key="5">
    <source>
    </source>
</evidence>
<evidence type="ECO:0000269" key="6">
    <source>
    </source>
</evidence>
<evidence type="ECO:0000269" key="7">
    <source>
    </source>
</evidence>
<evidence type="ECO:0000269" key="8">
    <source>
    </source>
</evidence>
<evidence type="ECO:0000269" key="9">
    <source>
    </source>
</evidence>
<evidence type="ECO:0000269" key="10">
    <source>
    </source>
</evidence>
<evidence type="ECO:0000269" key="11">
    <source>
    </source>
</evidence>
<evidence type="ECO:0000303" key="12">
    <source>
    </source>
</evidence>
<evidence type="ECO:0000303" key="13">
    <source>
    </source>
</evidence>
<evidence type="ECO:0000305" key="14"/>
<evidence type="ECO:0007744" key="15">
    <source>
    </source>
</evidence>
<protein>
    <recommendedName>
        <fullName>Transcription initiation factor TFIID subunit 4B</fullName>
    </recommendedName>
    <alternativeName>
        <fullName>Transcription initiation factor TFIID 105 kDa subunit</fullName>
        <shortName>TAF(II)105</shortName>
        <shortName>TAFII-105</shortName>
        <shortName>TAFII105</shortName>
    </alternativeName>
</protein>
<name>TAF4B_HUMAN</name>
<comment type="function">
    <text evidence="1 5 6 9 13">Cell type-specific subunit of the general transcription factor TFIID that may function as a gene-selective coactivator in certain cells. TFIID is a multimeric protein complex that plays a central role in mediating promoter responses to various activators and repressors. TAF4B is a transcriptional coactivator of the p65/RELA NF-kappa-B subunit. Involved in the activation of a subset of antiapoptotic genes including TNFAIP3. May be involved in regulating folliculogenesis. Through interaction with OCBA/POU2AF1, acts as a coactivator of B-cell-specific transcription. Plays a role in spermiogenesis and oogenesis.</text>
</comment>
<comment type="subunit">
    <text evidence="1 5 6 8">TFIID is composed of TATA binding protein (TBP) and a number of TBP-associated factors (TAFs) (PubMed:15601843). Heterodimerizes with TAF12/TFII20 via the C-terminal H2A-like histone-fold domain (PubMed:15601843). This heterodimer forms a histone-like octamer with the TAF6/TAFII70-TAF9/TAFII31 heterodimer (PubMed:15601843). Interacts with P65/RELA homodimers and P65/RELA-REL heterodimers (PubMed:10849440). Interaction with POU2AF1, via its C-terminal activation domain, is required for octamer-dependent transcription (PubMed:10828057). Interacts with ZNF628 (By similarity).</text>
</comment>
<comment type="subcellular location">
    <subcellularLocation>
        <location evidence="7 9">Nucleus</location>
    </subcellularLocation>
    <subcellularLocation>
        <location evidence="7 9">Cytoplasm</location>
    </subcellularLocation>
    <text evidence="7">Export into the cytoplasm is mediated by a CRM1-independent nuclear export pathway and not by phosphorylation.</text>
</comment>
<comment type="alternative products">
    <event type="alternative splicing"/>
    <isoform>
        <id>Q92750-1</id>
        <name>1</name>
        <sequence type="displayed"/>
    </isoform>
    <isoform>
        <id>Q92750-2</id>
        <name>2</name>
        <name>TAFII105-E9</name>
        <sequence type="described" ref="VSP_022025 VSP_022026"/>
    </isoform>
</comment>
<comment type="tissue specificity">
    <text evidence="9 11">Preferentially expressed in ovarian granulosa cells (at protein level). Highly expressed in B-cells.</text>
</comment>
<comment type="PTM">
    <text evidence="9">Under stimulation by forskolin, Isoform 1 is phosphorylated by protein kinase A (PKA).</text>
</comment>
<comment type="disease" evidence="10">
    <disease id="DI-04119">
        <name>Spermatogenic failure 13</name>
        <acronym>SPGF13</acronym>
        <description>A disorder resulting in the absence (azoospermia) or reduction (oligozoospermia) of sperm in the semen, leading to male infertility.</description>
        <dbReference type="MIM" id="615841"/>
    </disease>
    <text>The disease is caused by variants affecting the gene represented in this entry.</text>
</comment>
<comment type="miscellaneous">
    <molecule>Isoform 2</molecule>
    <text evidence="14">May be due to exon inclusion. Unphosphorylated form.</text>
</comment>
<comment type="similarity">
    <text evidence="14">Belongs to the TAF4 family.</text>
</comment>
<accession>Q92750</accession>
<accession>Q29YA4</accession>
<accession>Q29YA5</accession>
<keyword id="KW-0025">Alternative splicing</keyword>
<keyword id="KW-0175">Coiled coil</keyword>
<keyword id="KW-0963">Cytoplasm</keyword>
<keyword id="KW-0221">Differentiation</keyword>
<keyword id="KW-0903">Direct protein sequencing</keyword>
<keyword id="KW-0238">DNA-binding</keyword>
<keyword id="KW-0539">Nucleus</keyword>
<keyword id="KW-0896">Oogenesis</keyword>
<keyword id="KW-0597">Phosphoprotein</keyword>
<keyword id="KW-1267">Proteomics identification</keyword>
<keyword id="KW-1185">Reference proteome</keyword>
<keyword id="KW-0744">Spermatogenesis</keyword>
<keyword id="KW-0804">Transcription</keyword>
<keyword id="KW-0805">Transcription regulation</keyword>
<sequence>MPAGLTEPAGAAPPAAVSASGTVTMAPAGALPVRVESTPVALGAVTKAPVSVCVEPTASQPLRSPVGTLVTKVAPVSAPPKVSSGPRLPAPQIVAVKAPNTTTIQFPANLQLPPGTVLIKSNSGPLMLVSPQQTVTRAETTSNITSRPAVPANPQTVKICTVPNSSSQLIKKVAVTPVKKLAQIGTTVVTTVPKPSSVQSVAVPTSVVTVTPGKPLNTVTTLKPSSLGASSTPSNEPNLKAENSAAVQINLSPTMLENVKKCKNFLAMLIKLACSGSQSPEMGQNVKKLVEQLLDAKIEAEEFTRKLYVELKSSPQPHLVPFLKKSVVALRQLLPNSQSFIQQCVQQTSSDMVIATCTTTVTTSPVVTTTVSSSQSEKSIIVSGATAPRTVSVQTLNPLAGPVGAKAGVVTLHSVGPTAATGGTTAGTGLLQTSKPLVTSVANTVTTVSLQPEKPVVSGTAVTLSLPAVTFGETSGAAICLPSVKPVVSSAGTTSDKPVIGTPVQIKLAQPGPVLSQPAGIPQAVQVKQLVVQQPSGGNEKQVTTISHSSTLTIQKCGQKTMPVNTIIPTSQFPPASILKQITLPGNKILSLQASPTQKNRIKENVTSCFRDEDDINDVTSMAGVNLNEENACILATNSELVGTLIQSCKDEPFLFIGALQKRILDIGKKHDITELNSDAVNLISQATQERLRGLLEKLTAIAQHRMTTYKASENYILCSDTRSQLKFLEKLDQLEKQRKDLEEREMLLKAAKSRSNKEDPEQLRLKQKAKELQQLELAQIQHRDANLTALAAIGPRKKRPLESGIEGLKDNLLASGTSSLTATKQLHRPRITRICLRDLIFCMEQEREMKYSRALYLALLK</sequence>
<feature type="chain" id="PRO_0000118872" description="Transcription initiation factor TFIID subunit 4B">
    <location>
        <begin position="1"/>
        <end position="862"/>
    </location>
</feature>
<feature type="domain" description="TAFH" evidence="3">
    <location>
        <begin position="256"/>
        <end position="353"/>
    </location>
</feature>
<feature type="domain" description="Histone-fold">
    <location>
        <begin position="653"/>
        <end position="702"/>
    </location>
</feature>
<feature type="region of interest" description="Sufficient for interaction with ZNF628" evidence="1">
    <location>
        <begin position="100"/>
        <end position="241"/>
    </location>
</feature>
<feature type="region of interest" description="Disordered" evidence="4">
    <location>
        <begin position="219"/>
        <end position="239"/>
    </location>
</feature>
<feature type="region of interest" description="Required for interaction with P65/RELA" evidence="6">
    <location>
        <begin position="511"/>
        <end position="533"/>
    </location>
</feature>
<feature type="region of interest" description="Required for interaction with TAF12" evidence="8">
    <location>
        <begin position="830"/>
        <end position="862"/>
    </location>
</feature>
<feature type="coiled-coil region" evidence="2">
    <location>
        <begin position="722"/>
        <end position="787"/>
    </location>
</feature>
<feature type="short sequence motif" description="Nuclear export signal">
    <location>
        <begin position="516"/>
        <end position="556"/>
    </location>
</feature>
<feature type="compositionally biased region" description="Polar residues" evidence="4">
    <location>
        <begin position="219"/>
        <end position="237"/>
    </location>
</feature>
<feature type="modified residue" description="Phosphoserine" evidence="15">
    <location>
        <position position="595"/>
    </location>
</feature>
<feature type="splice variant" id="VSP_022025" description="In isoform 2." evidence="12">
    <original>DEDDIND</original>
    <variation>STFICVY</variation>
    <location>
        <begin position="612"/>
        <end position="618"/>
    </location>
</feature>
<feature type="splice variant" id="VSP_022026" description="In isoform 2." evidence="12">
    <location>
        <begin position="619"/>
        <end position="862"/>
    </location>
</feature>
<feature type="sequence variant" id="VAR_052259" description="In dbSNP:rs16942219.">
    <original>I</original>
    <variation>V</variation>
    <location>
        <position position="249"/>
    </location>
</feature>
<feature type="sequence variant" id="VAR_061836" description="In dbSNP:rs12963653.">
    <original>N</original>
    <variation>S</variation>
    <location>
        <position position="539"/>
    </location>
</feature>
<feature type="sequence conflict" description="In Ref. 2; CAA70499." evidence="14" ref="2">
    <original>SAGTTSD</original>
    <variation>FCWDHIC</variation>
    <location>
        <begin position="490"/>
        <end position="496"/>
    </location>
</feature>
<feature type="sequence conflict" description="In Ref. 2; CAA70499." evidence="14" ref="2">
    <original>QAVQVKQL</original>
    <variation>TGSSSKQLFSLFH</variation>
    <location>
        <begin position="523"/>
        <end position="530"/>
    </location>
</feature>
<proteinExistence type="evidence at protein level"/>
<gene>
    <name type="primary">TAF4B</name>
    <name type="synonym">TAF2C2</name>
    <name type="synonym">TAFII105</name>
</gene>
<dbReference type="EMBL" id="AY888048">
    <property type="protein sequence ID" value="AAX14897.1"/>
    <property type="molecule type" value="mRNA"/>
</dbReference>
<dbReference type="EMBL" id="AY888049">
    <property type="protein sequence ID" value="AAX14898.1"/>
    <property type="molecule type" value="mRNA"/>
</dbReference>
<dbReference type="EMBL" id="Y09321">
    <property type="protein sequence ID" value="CAA70499.1"/>
    <property type="molecule type" value="mRNA"/>
</dbReference>
<dbReference type="CCDS" id="CCDS42421.1">
    <molecule id="Q92750-1"/>
</dbReference>
<dbReference type="RefSeq" id="NP_001280654.1">
    <property type="nucleotide sequence ID" value="NM_001293725.1"/>
</dbReference>
<dbReference type="RefSeq" id="NP_005631.1">
    <molecule id="Q92750-1"/>
    <property type="nucleotide sequence ID" value="NM_005640.3"/>
</dbReference>
<dbReference type="SMR" id="Q92750"/>
<dbReference type="BioGRID" id="112738">
    <property type="interactions" value="25"/>
</dbReference>
<dbReference type="ComplexPortal" id="CPX-930">
    <property type="entry name" value="General transcription factor complex TFIID, TAF4B variant"/>
</dbReference>
<dbReference type="CORUM" id="Q92750"/>
<dbReference type="FunCoup" id="Q92750">
    <property type="interactions" value="2503"/>
</dbReference>
<dbReference type="IntAct" id="Q92750">
    <property type="interactions" value="11"/>
</dbReference>
<dbReference type="STRING" id="9606.ENSP00000462980"/>
<dbReference type="GlyCosmos" id="Q92750">
    <property type="glycosylation" value="7 sites, 1 glycan"/>
</dbReference>
<dbReference type="GlyGen" id="Q92750">
    <property type="glycosylation" value="19 sites, 1 O-linked glycan (14 sites)"/>
</dbReference>
<dbReference type="iPTMnet" id="Q92750"/>
<dbReference type="PhosphoSitePlus" id="Q92750"/>
<dbReference type="BioMuta" id="TAF4B"/>
<dbReference type="DMDM" id="119370533"/>
<dbReference type="jPOST" id="Q92750"/>
<dbReference type="MassIVE" id="Q92750"/>
<dbReference type="PaxDb" id="9606-ENSP00000269142"/>
<dbReference type="PeptideAtlas" id="Q92750"/>
<dbReference type="ProteomicsDB" id="75440">
    <molecule id="Q92750-1"/>
</dbReference>
<dbReference type="ProteomicsDB" id="75441">
    <molecule id="Q92750-2"/>
</dbReference>
<dbReference type="Antibodypedia" id="5168">
    <property type="antibodies" value="102 antibodies from 21 providers"/>
</dbReference>
<dbReference type="DNASU" id="6875"/>
<dbReference type="Ensembl" id="ENST00000269142.10">
    <molecule id="Q92750-1"/>
    <property type="protein sequence ID" value="ENSP00000269142.6"/>
    <property type="gene ID" value="ENSG00000141384.13"/>
</dbReference>
<dbReference type="Ensembl" id="ENST00000418698.3">
    <molecule id="Q92750-2"/>
    <property type="protein sequence ID" value="ENSP00000389365.3"/>
    <property type="gene ID" value="ENSG00000141384.13"/>
</dbReference>
<dbReference type="GeneID" id="6875"/>
<dbReference type="KEGG" id="hsa:6875"/>
<dbReference type="MANE-Select" id="ENST00000269142.10">
    <property type="protein sequence ID" value="ENSP00000269142.6"/>
    <property type="RefSeq nucleotide sequence ID" value="NM_005640.3"/>
    <property type="RefSeq protein sequence ID" value="NP_005631.1"/>
</dbReference>
<dbReference type="UCSC" id="uc002kvu.5">
    <molecule id="Q92750-1"/>
    <property type="organism name" value="human"/>
</dbReference>
<dbReference type="AGR" id="HGNC:11538"/>
<dbReference type="CTD" id="6875"/>
<dbReference type="DisGeNET" id="6875"/>
<dbReference type="GeneCards" id="TAF4B"/>
<dbReference type="HGNC" id="HGNC:11538">
    <property type="gene designation" value="TAF4B"/>
</dbReference>
<dbReference type="HPA" id="ENSG00000141384">
    <property type="expression patterns" value="Low tissue specificity"/>
</dbReference>
<dbReference type="MalaCards" id="TAF4B"/>
<dbReference type="MIM" id="601689">
    <property type="type" value="gene"/>
</dbReference>
<dbReference type="MIM" id="615841">
    <property type="type" value="phenotype"/>
</dbReference>
<dbReference type="neXtProt" id="NX_Q92750"/>
<dbReference type="OpenTargets" id="ENSG00000141384"/>
<dbReference type="Orphanet" id="399805">
    <property type="disease" value="Male infertility with azoospermia or oligozoospermia due to single gene mutation"/>
</dbReference>
<dbReference type="PharmGKB" id="PA36313"/>
<dbReference type="VEuPathDB" id="HostDB:ENSG00000141384"/>
<dbReference type="eggNOG" id="KOG2341">
    <property type="taxonomic scope" value="Eukaryota"/>
</dbReference>
<dbReference type="GeneTree" id="ENSGT00390000011620"/>
<dbReference type="HOGENOM" id="CLU_010576_2_0_1"/>
<dbReference type="InParanoid" id="Q92750"/>
<dbReference type="OMA" id="NKQVTPR"/>
<dbReference type="OrthoDB" id="21060at2759"/>
<dbReference type="PAN-GO" id="Q92750">
    <property type="GO annotations" value="4 GO annotations based on evolutionary models"/>
</dbReference>
<dbReference type="PhylomeDB" id="Q92750"/>
<dbReference type="TreeFam" id="TF316520"/>
<dbReference type="PathwayCommons" id="Q92750"/>
<dbReference type="Reactome" id="R-HSA-167161">
    <property type="pathway name" value="HIV Transcription Initiation"/>
</dbReference>
<dbReference type="Reactome" id="R-HSA-167162">
    <property type="pathway name" value="RNA Polymerase II HIV Promoter Escape"/>
</dbReference>
<dbReference type="Reactome" id="R-HSA-167172">
    <property type="pathway name" value="Transcription of the HIV genome"/>
</dbReference>
<dbReference type="Reactome" id="R-HSA-674695">
    <property type="pathway name" value="RNA Polymerase II Pre-transcription Events"/>
</dbReference>
<dbReference type="Reactome" id="R-HSA-6804756">
    <property type="pathway name" value="Regulation of TP53 Activity through Phosphorylation"/>
</dbReference>
<dbReference type="Reactome" id="R-HSA-73776">
    <property type="pathway name" value="RNA Polymerase II Promoter Escape"/>
</dbReference>
<dbReference type="Reactome" id="R-HSA-73779">
    <property type="pathway name" value="RNA Polymerase II Transcription Pre-Initiation And Promoter Opening"/>
</dbReference>
<dbReference type="Reactome" id="R-HSA-75953">
    <property type="pathway name" value="RNA Polymerase II Transcription Initiation"/>
</dbReference>
<dbReference type="Reactome" id="R-HSA-76042">
    <property type="pathway name" value="RNA Polymerase II Transcription Initiation And Promoter Clearance"/>
</dbReference>
<dbReference type="SignaLink" id="Q92750"/>
<dbReference type="BioGRID-ORCS" id="6875">
    <property type="hits" value="18 hits in 1157 CRISPR screens"/>
</dbReference>
<dbReference type="ChiTaRS" id="TAF4B">
    <property type="organism name" value="human"/>
</dbReference>
<dbReference type="GeneWiki" id="TAF4B"/>
<dbReference type="GenomeRNAi" id="6875"/>
<dbReference type="Pharos" id="Q92750">
    <property type="development level" value="Tbio"/>
</dbReference>
<dbReference type="PRO" id="PR:Q92750"/>
<dbReference type="Proteomes" id="UP000005640">
    <property type="component" value="Chromosome 18"/>
</dbReference>
<dbReference type="RNAct" id="Q92750">
    <property type="molecule type" value="protein"/>
</dbReference>
<dbReference type="Bgee" id="ENSG00000141384">
    <property type="expression patterns" value="Expressed in secondary oocyte and 163 other cell types or tissues"/>
</dbReference>
<dbReference type="ExpressionAtlas" id="Q92750">
    <property type="expression patterns" value="baseline and differential"/>
</dbReference>
<dbReference type="GO" id="GO:0005737">
    <property type="term" value="C:cytoplasm"/>
    <property type="evidence" value="ECO:0007669"/>
    <property type="project" value="UniProtKB-SubCell"/>
</dbReference>
<dbReference type="GO" id="GO:0001650">
    <property type="term" value="C:fibrillar center"/>
    <property type="evidence" value="ECO:0000314"/>
    <property type="project" value="HPA"/>
</dbReference>
<dbReference type="GO" id="GO:0005654">
    <property type="term" value="C:nucleoplasm"/>
    <property type="evidence" value="ECO:0000314"/>
    <property type="project" value="HPA"/>
</dbReference>
<dbReference type="GO" id="GO:0005634">
    <property type="term" value="C:nucleus"/>
    <property type="evidence" value="ECO:0000250"/>
    <property type="project" value="ComplexPortal"/>
</dbReference>
<dbReference type="GO" id="GO:0005669">
    <property type="term" value="C:transcription factor TFIID complex"/>
    <property type="evidence" value="ECO:0000314"/>
    <property type="project" value="ARUK-UCL"/>
</dbReference>
<dbReference type="GO" id="GO:0003677">
    <property type="term" value="F:DNA binding"/>
    <property type="evidence" value="ECO:0000314"/>
    <property type="project" value="UniProtKB"/>
</dbReference>
<dbReference type="GO" id="GO:0051059">
    <property type="term" value="F:NF-kappaB binding"/>
    <property type="evidence" value="ECO:0000353"/>
    <property type="project" value="UniProtKB"/>
</dbReference>
<dbReference type="GO" id="GO:0046982">
    <property type="term" value="F:protein heterodimerization activity"/>
    <property type="evidence" value="ECO:0007669"/>
    <property type="project" value="InterPro"/>
</dbReference>
<dbReference type="GO" id="GO:0016251">
    <property type="term" value="F:RNA polymerase II general transcription initiation factor activity"/>
    <property type="evidence" value="ECO:0000305"/>
    <property type="project" value="ARUK-UCL"/>
</dbReference>
<dbReference type="GO" id="GO:0042789">
    <property type="term" value="P:mRNA transcription by RNA polymerase II"/>
    <property type="evidence" value="ECO:0000314"/>
    <property type="project" value="ComplexPortal"/>
</dbReference>
<dbReference type="GO" id="GO:0048477">
    <property type="term" value="P:oogenesis"/>
    <property type="evidence" value="ECO:0007669"/>
    <property type="project" value="UniProtKB-KW"/>
</dbReference>
<dbReference type="GO" id="GO:0060261">
    <property type="term" value="P:positive regulation of transcription initiation by RNA polymerase II"/>
    <property type="evidence" value="ECO:0000314"/>
    <property type="project" value="ComplexPortal"/>
</dbReference>
<dbReference type="GO" id="GO:0051123">
    <property type="term" value="P:RNA polymerase II preinitiation complex assembly"/>
    <property type="evidence" value="ECO:0000250"/>
    <property type="project" value="ComplexPortal"/>
</dbReference>
<dbReference type="GO" id="GO:0007283">
    <property type="term" value="P:spermatogenesis"/>
    <property type="evidence" value="ECO:0007669"/>
    <property type="project" value="UniProtKB-KW"/>
</dbReference>
<dbReference type="GO" id="GO:0006367">
    <property type="term" value="P:transcription initiation at RNA polymerase II promoter"/>
    <property type="evidence" value="ECO:0000318"/>
    <property type="project" value="GO_Central"/>
</dbReference>
<dbReference type="CDD" id="cd08045">
    <property type="entry name" value="HFD_TAF4"/>
    <property type="match status" value="1"/>
</dbReference>
<dbReference type="FunFam" id="1.10.20.10:FF:000015">
    <property type="entry name" value="Transcription initiation factor TFIID subunit 4B"/>
    <property type="match status" value="1"/>
</dbReference>
<dbReference type="FunFam" id="1.20.120.1110:FF:000002">
    <property type="entry name" value="Transcription initiation factor TFIID subunit 4B"/>
    <property type="match status" value="1"/>
</dbReference>
<dbReference type="Gene3D" id="1.10.20.10">
    <property type="entry name" value="Histone, subunit A"/>
    <property type="match status" value="1"/>
</dbReference>
<dbReference type="Gene3D" id="1.20.120.1110">
    <property type="entry name" value="TAFH/NHR1 domain"/>
    <property type="match status" value="1"/>
</dbReference>
<dbReference type="InterPro" id="IPR009072">
    <property type="entry name" value="Histone-fold"/>
</dbReference>
<dbReference type="InterPro" id="IPR045144">
    <property type="entry name" value="TAF4"/>
</dbReference>
<dbReference type="InterPro" id="IPR007900">
    <property type="entry name" value="TAF4_C"/>
</dbReference>
<dbReference type="InterPro" id="IPR037249">
    <property type="entry name" value="TAFH/NHR1_dom_sf"/>
</dbReference>
<dbReference type="InterPro" id="IPR003894">
    <property type="entry name" value="TAFH_NHR1"/>
</dbReference>
<dbReference type="PANTHER" id="PTHR15138">
    <property type="entry name" value="TRANSCRIPTION INITIATION FACTOR TFIID SUBUNIT 4"/>
    <property type="match status" value="1"/>
</dbReference>
<dbReference type="PANTHER" id="PTHR15138:SF17">
    <property type="entry name" value="TRANSCRIPTION INITIATION FACTOR TFIID SUBUNIT 4B"/>
    <property type="match status" value="1"/>
</dbReference>
<dbReference type="Pfam" id="PF05236">
    <property type="entry name" value="TAF4"/>
    <property type="match status" value="1"/>
</dbReference>
<dbReference type="Pfam" id="PF07531">
    <property type="entry name" value="TAFH"/>
    <property type="match status" value="1"/>
</dbReference>
<dbReference type="SMART" id="SM00549">
    <property type="entry name" value="TAFH"/>
    <property type="match status" value="1"/>
</dbReference>
<dbReference type="SUPFAM" id="SSF47113">
    <property type="entry name" value="Histone-fold"/>
    <property type="match status" value="1"/>
</dbReference>
<dbReference type="SUPFAM" id="SSF158553">
    <property type="entry name" value="TAFH domain-like"/>
    <property type="match status" value="1"/>
</dbReference>
<dbReference type="PROSITE" id="PS51119">
    <property type="entry name" value="TAFH"/>
    <property type="match status" value="1"/>
</dbReference>
<organism>
    <name type="scientific">Homo sapiens</name>
    <name type="common">Human</name>
    <dbReference type="NCBI Taxonomy" id="9606"/>
    <lineage>
        <taxon>Eukaryota</taxon>
        <taxon>Metazoa</taxon>
        <taxon>Chordata</taxon>
        <taxon>Craniata</taxon>
        <taxon>Vertebrata</taxon>
        <taxon>Euteleostomi</taxon>
        <taxon>Mammalia</taxon>
        <taxon>Eutheria</taxon>
        <taxon>Euarchontoglires</taxon>
        <taxon>Primates</taxon>
        <taxon>Haplorrhini</taxon>
        <taxon>Catarrhini</taxon>
        <taxon>Hominidae</taxon>
        <taxon>Homo</taxon>
    </lineage>
</organism>